<gene>
    <name type="primary">PTS</name>
</gene>
<organism>
    <name type="scientific">Homo sapiens</name>
    <name type="common">Human</name>
    <dbReference type="NCBI Taxonomy" id="9606"/>
    <lineage>
        <taxon>Eukaryota</taxon>
        <taxon>Metazoa</taxon>
        <taxon>Chordata</taxon>
        <taxon>Craniata</taxon>
        <taxon>Vertebrata</taxon>
        <taxon>Euteleostomi</taxon>
        <taxon>Mammalia</taxon>
        <taxon>Eutheria</taxon>
        <taxon>Euarchontoglires</taxon>
        <taxon>Primates</taxon>
        <taxon>Haplorrhini</taxon>
        <taxon>Catarrhini</taxon>
        <taxon>Hominidae</taxon>
        <taxon>Homo</taxon>
    </lineage>
</organism>
<name>PTPS_HUMAN</name>
<reference key="1">
    <citation type="journal article" date="1992" name="Biochem. Biophys. Res. Commun.">
        <title>Human 6-pyruvoyltetrahydropterin synthase: cDNA cloning and heterologous expression of the recombinant enzyme.</title>
        <authorList>
            <person name="Thoeny B."/>
            <person name="Leimbacher W."/>
            <person name="Buergisser D."/>
            <person name="Heizmann C.W."/>
        </authorList>
    </citation>
    <scope>NUCLEOTIDE SEQUENCE [MRNA]</scope>
    <scope>FUNCTION</scope>
    <scope>CATALYTIC ACTIVITY</scope>
    <source>
        <tissue>Liver</tissue>
    </source>
</reference>
<reference key="2">
    <citation type="journal article" date="1993" name="Biochem. Biophys. Res. Commun.">
        <title>cDNA cloning, expression in Escherichia coli and purification of human 6-pyruvoyl-tetrahydropterin synthase.</title>
        <authorList>
            <person name="Ashida A."/>
            <person name="Hatakeyama K."/>
            <person name="Kagamiyama H."/>
        </authorList>
    </citation>
    <scope>NUCLEOTIDE SEQUENCE [MRNA]</scope>
</reference>
<reference key="3">
    <citation type="journal article" date="1994" name="Genomics">
        <title>A missense mutation (A to G) of 6-pyruvoyltetrahydropterin synthase in tetrahydrobiopterin-deficient form of hyperphenylalaninemia.</title>
        <authorList>
            <person name="Ashida A."/>
            <person name="Owada M."/>
            <person name="Hatakeyama K."/>
        </authorList>
    </citation>
    <scope>NUCLEOTIDE SEQUENCE [GENOMIC DNA]</scope>
    <scope>VARIANT HPABH4A VAL-114</scope>
</reference>
<reference key="4">
    <citation type="journal article" date="1996" name="Eur. J. Biochem.">
        <title>Chromosomal localization, genomic structure and characterization of the human gene and a retropseudogene for 6-pyruvoyltetrahydropterin synthase.</title>
        <authorList>
            <person name="Kluge C."/>
            <person name="Brecevic L."/>
            <person name="Heizmann C.W."/>
            <person name="Blau N."/>
            <person name="Thoeny B."/>
        </authorList>
    </citation>
    <scope>NUCLEOTIDE SEQUENCE [GENOMIC DNA]</scope>
</reference>
<reference key="5">
    <citation type="journal article" date="1998" name="J. Biomed. Lab. Sci.">
        <title>Genomic structure of 6-pyruvoyl-tetrahydropterin synthase gene and a T/C polymorphism detected in Chinese.</title>
        <authorList>
            <person name="Liu T.T."/>
            <person name="Lu S.F."/>
            <person name="Hsiao K.J."/>
        </authorList>
    </citation>
    <scope>NUCLEOTIDE SEQUENCE [GENOMIC DNA]</scope>
</reference>
<reference key="6">
    <citation type="submission" date="2000-05" db="EMBL/GenBank/DDBJ databases">
        <title>Isolation and sequencing of human 6-pyruvoyl-tetrahydropterin synthase gene containing BAC clone 321H15.</title>
        <authorList>
            <person name="Hsiao K.-J."/>
            <person name="Liu T.-T."/>
            <person name="Chang Y.-H."/>
            <person name="Chiu Y.-H."/>
            <person name="Chiang S.-H."/>
            <person name="Chang H.-M."/>
            <person name="Chen C.-Y."/>
            <person name="Tsai S.-F."/>
        </authorList>
    </citation>
    <scope>NUCLEOTIDE SEQUENCE [GENOMIC DNA]</scope>
</reference>
<reference key="7">
    <citation type="submission" date="2007-02" db="EMBL/GenBank/DDBJ databases">
        <authorList>
            <consortium name="NHLBI resequencing and genotyping service (RS&amp;G)"/>
        </authorList>
    </citation>
    <scope>NUCLEOTIDE SEQUENCE [GENOMIC DNA]</scope>
</reference>
<reference key="8">
    <citation type="submission" date="2005-07" db="EMBL/GenBank/DDBJ databases">
        <authorList>
            <person name="Mural R.J."/>
            <person name="Istrail S."/>
            <person name="Sutton G.G."/>
            <person name="Florea L."/>
            <person name="Halpern A.L."/>
            <person name="Mobarry C.M."/>
            <person name="Lippert R."/>
            <person name="Walenz B."/>
            <person name="Shatkay H."/>
            <person name="Dew I."/>
            <person name="Miller J.R."/>
            <person name="Flanigan M.J."/>
            <person name="Edwards N.J."/>
            <person name="Bolanos R."/>
            <person name="Fasulo D."/>
            <person name="Halldorsson B.V."/>
            <person name="Hannenhalli S."/>
            <person name="Turner R."/>
            <person name="Yooseph S."/>
            <person name="Lu F."/>
            <person name="Nusskern D.R."/>
            <person name="Shue B.C."/>
            <person name="Zheng X.H."/>
            <person name="Zhong F."/>
            <person name="Delcher A.L."/>
            <person name="Huson D.H."/>
            <person name="Kravitz S.A."/>
            <person name="Mouchard L."/>
            <person name="Reinert K."/>
            <person name="Remington K.A."/>
            <person name="Clark A.G."/>
            <person name="Waterman M.S."/>
            <person name="Eichler E.E."/>
            <person name="Adams M.D."/>
            <person name="Hunkapiller M.W."/>
            <person name="Myers E.W."/>
            <person name="Venter J.C."/>
        </authorList>
    </citation>
    <scope>NUCLEOTIDE SEQUENCE [LARGE SCALE GENOMIC DNA]</scope>
</reference>
<reference key="9">
    <citation type="journal article" date="2004" name="Genome Res.">
        <title>The status, quality, and expansion of the NIH full-length cDNA project: the Mammalian Gene Collection (MGC).</title>
        <authorList>
            <consortium name="The MGC Project Team"/>
        </authorList>
    </citation>
    <scope>NUCLEOTIDE SEQUENCE [LARGE SCALE MRNA]</scope>
    <source>
        <tissue>Brain</tissue>
        <tissue>Pancreas</tissue>
    </source>
</reference>
<reference key="10">
    <citation type="journal article" date="2008" name="Proc. Natl. Acad. Sci. U.S.A.">
        <title>A quantitative atlas of mitotic phosphorylation.</title>
        <authorList>
            <person name="Dephoure N."/>
            <person name="Zhou C."/>
            <person name="Villen J."/>
            <person name="Beausoleil S.A."/>
            <person name="Bakalarski C.E."/>
            <person name="Elledge S.J."/>
            <person name="Gygi S.P."/>
        </authorList>
    </citation>
    <scope>PHOSPHORYLATION [LARGE SCALE ANALYSIS] AT SER-19</scope>
    <scope>IDENTIFICATION BY MASS SPECTROMETRY [LARGE SCALE ANALYSIS]</scope>
    <source>
        <tissue>Cervix carcinoma</tissue>
    </source>
</reference>
<reference key="11">
    <citation type="journal article" date="2010" name="Sci. Signal.">
        <title>Quantitative phosphoproteomics reveals widespread full phosphorylation site occupancy during mitosis.</title>
        <authorList>
            <person name="Olsen J.V."/>
            <person name="Vermeulen M."/>
            <person name="Santamaria A."/>
            <person name="Kumar C."/>
            <person name="Miller M.L."/>
            <person name="Jensen L.J."/>
            <person name="Gnad F."/>
            <person name="Cox J."/>
            <person name="Jensen T.S."/>
            <person name="Nigg E.A."/>
            <person name="Brunak S."/>
            <person name="Mann M."/>
        </authorList>
    </citation>
    <scope>PHOSPHORYLATION [LARGE SCALE ANALYSIS] AT SER-19</scope>
    <scope>IDENTIFICATION BY MASS SPECTROMETRY [LARGE SCALE ANALYSIS]</scope>
    <source>
        <tissue>Cervix carcinoma</tissue>
    </source>
</reference>
<reference key="12">
    <citation type="journal article" date="2013" name="J. Proteome Res.">
        <title>Toward a comprehensive characterization of a human cancer cell phosphoproteome.</title>
        <authorList>
            <person name="Zhou H."/>
            <person name="Di Palma S."/>
            <person name="Preisinger C."/>
            <person name="Peng M."/>
            <person name="Polat A.N."/>
            <person name="Heck A.J."/>
            <person name="Mohammed S."/>
        </authorList>
    </citation>
    <scope>PHOSPHORYLATION [LARGE SCALE ANALYSIS] AT SER-19</scope>
    <scope>IDENTIFICATION BY MASS SPECTROMETRY [LARGE SCALE ANALYSIS]</scope>
    <source>
        <tissue>Cervix carcinoma</tissue>
        <tissue>Erythroleukemia</tissue>
    </source>
</reference>
<reference key="13">
    <citation type="journal article" date="2014" name="J. Proteomics">
        <title>An enzyme assisted RP-RPLC approach for in-depth analysis of human liver phosphoproteome.</title>
        <authorList>
            <person name="Bian Y."/>
            <person name="Song C."/>
            <person name="Cheng K."/>
            <person name="Dong M."/>
            <person name="Wang F."/>
            <person name="Huang J."/>
            <person name="Sun D."/>
            <person name="Wang L."/>
            <person name="Ye M."/>
            <person name="Zou H."/>
        </authorList>
    </citation>
    <scope>PHOSPHORYLATION [LARGE SCALE ANALYSIS] AT SER-19 AND TYR-128</scope>
    <scope>IDENTIFICATION BY MASS SPECTROMETRY [LARGE SCALE ANALYSIS]</scope>
    <source>
        <tissue>Liver</tissue>
    </source>
</reference>
<reference key="14">
    <citation type="journal article" date="1999" name="J. Biol. Chem.">
        <title>Serine 19 of human 6-pyruvoyltetrahydropterin synthase is phosphorylated by cGMP protein kinase II.</title>
        <authorList>
            <person name="Scherer-Oppliger T."/>
            <person name="Leimbacher W."/>
            <person name="Blau N."/>
            <person name="Thoeny B."/>
        </authorList>
    </citation>
    <scope>CHARACTERIZATION OF VARIANTS HPABH4A CYS-16 AND GLN-25</scope>
    <scope>KINETIC PARAMETERS</scope>
    <scope>PHOSPHORYLATION AT SER-19</scope>
    <scope>MUTAGENESIS OF SER-19</scope>
</reference>
<reference key="15">
    <citation type="journal article" date="1997" name="Hum. Mutat.">
        <title>Mutations in the GTP cyclohydrolase I and 6-pyruvoyl-tetrahydropterin synthase genes.</title>
        <authorList>
            <person name="Thoeny B."/>
            <person name="Blau N."/>
        </authorList>
    </citation>
    <scope>REVIEW ON VARIANTS</scope>
</reference>
<reference key="16">
    <citation type="journal article" date="1994" name="Am. J. Hum. Genet.">
        <title>Hyperphenylalaninemia due to defects in tetrahydrobiopterin metabolism: molecular characterization of mutations in 6-pyruvoyl-tetrahydropterin synthase.</title>
        <authorList>
            <person name="Thoeny B."/>
            <person name="Leimbacher W."/>
            <person name="Blau N."/>
            <person name="Harvie A."/>
            <person name="Heizmann C.W."/>
        </authorList>
    </citation>
    <scope>VARIANTS HPABH4A CYS-16 AND GLN-25</scope>
</reference>
<reference key="17">
    <citation type="journal article" date="1995" name="J. Biol. Chem.">
        <title>Structural and functional consequences of mutations in 6-pyruvoyltetrahydropterin synthase causing hyperphenylalaninemia in humans. Phosphorylation is a requirement for in vivo activity.</title>
        <authorList>
            <person name="Oppliger T."/>
            <person name="Thoeny B."/>
            <person name="Nar H."/>
            <person name="Buergisser D."/>
            <person name="Huber R."/>
            <person name="Heizmann C.W."/>
            <person name="Blau N."/>
        </authorList>
    </citation>
    <scope>CHARACTERIZATION OF VARIANTS HPABH4A CYS-16; GLN-25; VAL-57 DEL AND LEU-87</scope>
</reference>
<reference key="18">
    <citation type="journal article" date="1996" name="Hum. Genet.">
        <title>Identification of a common 6-pyruvoyl-tetrahydropterin synthase mutation at codon 87 in Chinese phenylketonuria caused by tetrahydrobiopterin synthesis deficiency.</title>
        <authorList>
            <person name="Liu T.T."/>
            <person name="Hsiao K.J."/>
        </authorList>
    </citation>
    <scope>VARIANTS HPABH4A SER-52 AND SER-87</scope>
</reference>
<reference key="19">
    <citation type="journal article" date="1997" name="Hum. Mutat.">
        <title>Identification of mutations causing 6-pyruvoyl-tetrahydropterin synthase deficiency in four Italian families.</title>
        <authorList>
            <person name="Oppliger T."/>
            <person name="Thoeny B."/>
            <person name="Kluge C."/>
            <person name="Matasovic A."/>
            <person name="Heizmann C.W."/>
            <person name="Ponzone A."/>
            <person name="Spada M."/>
            <person name="Blau N."/>
        </authorList>
    </citation>
    <scope>VARIANTS HPABH4A VAL-57 DEL; MET-67; GLU-129 AND VAL-136</scope>
</reference>
<reference key="20">
    <citation type="journal article" date="1997" name="Mov. Disord.">
        <title>6-pyruvoyl-tetrahydropterin synthase deficiency with generalized dystonia and diurnal fluctuation of symptoms: a clinical and molecular study.</title>
        <authorList>
            <person name="Hanihara T."/>
            <person name="Inoue K."/>
            <person name="Kawanishi C."/>
            <person name="Sugiyama N."/>
            <person name="Miyakawa T."/>
            <person name="Onishi H."/>
            <person name="Yamada Y."/>
            <person name="Osaka H."/>
            <person name="Kosaka K."/>
            <person name="Iwabuchi K."/>
            <person name="Owada M."/>
        </authorList>
    </citation>
    <scope>VARIANT HPABH4A VAL-114</scope>
</reference>
<reference key="21">
    <citation type="journal article" date="1998" name="Hum. Mutat.">
        <title>Mutation analysis of the 6-pyruvoyl-tetrahydropterin synthase gene in Chinese hyperphenylalaninemia caused by tetrahydrobiopterin synthesis deficiency.</title>
        <authorList>
            <person name="Liu T.-T."/>
            <person name="Hsiao K.-J."/>
            <person name="Lu S.-F."/>
            <person name="Wu S.-J."/>
            <person name="Wu K.-F."/>
            <person name="Chiang S.-H."/>
            <person name="Liu X.-Q."/>
            <person name="Chen R.-G."/>
            <person name="Yu W.-M."/>
        </authorList>
    </citation>
    <scope>VARIANTS HPABH4A GLY-25; SER-52; MET-56; ASP-70; SER-87; ASN-96 AND MET-106</scope>
</reference>
<reference key="22">
    <citation type="journal article" date="1999" name="Clin. Chem.">
        <title>Single-step mutation scanning of the 6-pyruvoyltetrahydropterin synthase gene in patients with hyperphenylalaninemia.</title>
        <authorList>
            <person name="Romstad A."/>
            <person name="Guldberg P."/>
            <person name="Blau N."/>
            <person name="Guettler F."/>
        </authorList>
    </citation>
    <scope>VARIANTS HPABH4A VAL-57 DEL AND MET-97</scope>
</reference>
<reference key="23">
    <citation type="journal article" date="1999" name="Hum. Mutat.">
        <title>Dominant negative allele (N47D) in a compound heterozygote for a variant of 6-pyruvoyltetrahydropterin synthase deficiency causing transient hyperphenylalaninemia.</title>
        <authorList>
            <person name="Scherer-Oppliger T."/>
            <person name="Matasovic A."/>
            <person name="Laufs S."/>
            <person name="Levy H.L."/>
            <person name="Quackenbush E.J."/>
            <person name="Blau N."/>
            <person name="Thoeny B."/>
        </authorList>
    </citation>
    <scope>VARIANTS HPABH4A ASP-47 AND GLY-116</scope>
</reference>
<reference key="24">
    <citation type="journal article" date="2000" name="Hum. Mutat.">
        <title>Isolated central form of tetrahydrobiopterin deficiency associated with hemizygosity on chromosome 11q and a mutant allele of PTPS.</title>
        <authorList>
            <person name="Blau N."/>
            <person name="Scherer-Oppliger T."/>
            <person name="Baumer A."/>
            <person name="Riegel M."/>
            <person name="Matasovic A."/>
            <person name="Schinzel A."/>
            <person name="Jaeken J."/>
            <person name="Thoeny B."/>
        </authorList>
    </citation>
    <scope>VARIANT HPABH4A CYS-99</scope>
</reference>
<reference key="25">
    <citation type="journal article" date="2001" name="Eur. J. Pediatr.">
        <title>Molecular analysis and long-term follow-up of patients with different forms of 6-pyruvoyl-tetrahydropterin synthase deficiency.</title>
        <authorList>
            <person name="Dudesek A."/>
            <person name="Roeschinger W."/>
            <person name="Muntau A.C."/>
            <person name="Seidel J."/>
            <person name="Leupold D."/>
            <person name="Thoeny B."/>
            <person name="Blau N."/>
        </authorList>
    </citation>
    <scope>VARIANTS HPABH4A PHE-26; MET-67; LEU-87; LEU-124; GLY-136 AND VAL-136</scope>
</reference>
<evidence type="ECO:0000250" key="1"/>
<evidence type="ECO:0000250" key="2">
    <source>
        <dbReference type="UniProtKB" id="Q9R1Z7"/>
    </source>
</evidence>
<evidence type="ECO:0000255" key="3">
    <source>
        <dbReference type="PROSITE-ProRule" id="PRU10123"/>
    </source>
</evidence>
<evidence type="ECO:0000255" key="4">
    <source>
        <dbReference type="PROSITE-ProRule" id="PRU10124"/>
    </source>
</evidence>
<evidence type="ECO:0000269" key="5">
    <source>
    </source>
</evidence>
<evidence type="ECO:0000269" key="6">
    <source>
    </source>
</evidence>
<evidence type="ECO:0000269" key="7">
    <source>
    </source>
</evidence>
<evidence type="ECO:0000269" key="8">
    <source>
    </source>
</evidence>
<evidence type="ECO:0000269" key="9">
    <source>
    </source>
</evidence>
<evidence type="ECO:0000269" key="10">
    <source>
    </source>
</evidence>
<evidence type="ECO:0000269" key="11">
    <source>
    </source>
</evidence>
<evidence type="ECO:0000269" key="12">
    <source>
    </source>
</evidence>
<evidence type="ECO:0000269" key="13">
    <source>
    </source>
</evidence>
<evidence type="ECO:0000269" key="14">
    <source>
    </source>
</evidence>
<evidence type="ECO:0000269" key="15">
    <source>
    </source>
</evidence>
<evidence type="ECO:0000269" key="16">
    <source>
    </source>
</evidence>
<evidence type="ECO:0000269" key="17">
    <source>
    </source>
</evidence>
<evidence type="ECO:0000305" key="18"/>
<evidence type="ECO:0007744" key="19">
    <source>
    </source>
</evidence>
<evidence type="ECO:0007744" key="20">
    <source>
    </source>
</evidence>
<evidence type="ECO:0007744" key="21">
    <source>
    </source>
</evidence>
<evidence type="ECO:0007744" key="22">
    <source>
    </source>
</evidence>
<evidence type="ECO:0007829" key="23">
    <source>
        <dbReference type="PDB" id="3I2B"/>
    </source>
</evidence>
<feature type="chain" id="PRO_0000057914" description="6-pyruvoyl tetrahydrobiopterin synthase">
    <location>
        <begin position="1"/>
        <end position="145"/>
    </location>
</feature>
<feature type="active site" description="Proton acceptor" evidence="3">
    <location>
        <position position="43"/>
    </location>
</feature>
<feature type="active site" description="Charge relay system" evidence="4">
    <location>
        <position position="90"/>
    </location>
</feature>
<feature type="active site" description="Charge relay system" evidence="4">
    <location>
        <position position="134"/>
    </location>
</feature>
<feature type="binding site" evidence="3">
    <location>
        <position position="24"/>
    </location>
    <ligand>
        <name>Zn(2+)</name>
        <dbReference type="ChEBI" id="CHEBI:29105"/>
    </ligand>
</feature>
<feature type="binding site" evidence="3">
    <location>
        <position position="49"/>
    </location>
    <ligand>
        <name>Zn(2+)</name>
        <dbReference type="ChEBI" id="CHEBI:29105"/>
    </ligand>
</feature>
<feature type="binding site" evidence="3">
    <location>
        <position position="51"/>
    </location>
    <ligand>
        <name>Zn(2+)</name>
        <dbReference type="ChEBI" id="CHEBI:29105"/>
    </ligand>
</feature>
<feature type="modified residue" description="Phosphoserine; by PKG" evidence="6 19 20 21 22">
    <location>
        <position position="19"/>
    </location>
</feature>
<feature type="modified residue" description="Phosphoserine" evidence="2">
    <location>
        <position position="28"/>
    </location>
</feature>
<feature type="modified residue" description="Phosphotyrosine" evidence="22">
    <location>
        <position position="128"/>
    </location>
</feature>
<feature type="sequence variant" id="VAR_006816" description="In HPABH4A; severe decrease in activity; diminishes phosphorylation by PKG; dbSNP:rs104894274." evidence="6 11 13">
    <original>R</original>
    <variation>C</variation>
    <location>
        <position position="16"/>
    </location>
</feature>
<feature type="sequence variant" id="VAR_006817" description="In HPABH4A; severe form; dbSNP:rs1167104933." evidence="17">
    <original>R</original>
    <variation>G</variation>
    <location>
        <position position="25"/>
    </location>
</feature>
<feature type="sequence variant" id="VAR_006818" description="In HPABH4A; abolishes activity; no effect on phosphorylation by PKG; dbSNP:rs104894273." evidence="6 11 13">
    <original>R</original>
    <variation>Q</variation>
    <location>
        <position position="25"/>
    </location>
</feature>
<feature type="sequence variant" id="VAR_058265" description="In HPABH4A; dbSNP:rs1317230624." evidence="9">
    <original>L</original>
    <variation>F</variation>
    <location>
        <position position="26"/>
    </location>
</feature>
<feature type="sequence variant" id="VAR_006819" description="In HPABH4A; dbSNP:rs1328320990.">
    <original>E</original>
    <variation>G</variation>
    <location>
        <position position="35"/>
    </location>
</feature>
<feature type="sequence variant" id="VAR_006820" description="In HPABH4A; dbSNP:rs1449216377.">
    <original>N</original>
    <variation>K</variation>
    <location>
        <position position="36"/>
    </location>
</feature>
<feature type="sequence variant" id="VAR_008040" description="In HPABH4A; transient phenotype due to partial PTS deficiency; total loss of activity; dbSNP:rs104894278." evidence="5">
    <original>N</original>
    <variation>D</variation>
    <location>
        <position position="47"/>
    </location>
</feature>
<feature type="sequence variant" id="VAR_006821" description="In HPABH4A; severe form; dbSNP:rs104894275." evidence="14 17">
    <original>N</original>
    <variation>S</variation>
    <location>
        <position position="52"/>
    </location>
</feature>
<feature type="sequence variant" id="VAR_006822" description="In HPABH4A; mild form; dbSNP:rs104894277." evidence="17">
    <original>V</original>
    <variation>M</variation>
    <location>
        <position position="56"/>
    </location>
</feature>
<feature type="sequence variant" id="VAR_006823" description="In HPABH4A; dbSNP:rs770387277." evidence="7 11 16">
    <location>
        <position position="57"/>
    </location>
</feature>
<feature type="sequence variant" id="VAR_006824" description="In HPABH4A; dbSNP:rs370340361." evidence="9 16">
    <original>T</original>
    <variation>M</variation>
    <location>
        <position position="67"/>
    </location>
</feature>
<feature type="sequence variant" id="VAR_006825" description="In HPABH4A; dbSNP:rs1592880489." evidence="17">
    <original>V</original>
    <variation>D</variation>
    <location>
        <position position="70"/>
    </location>
</feature>
<feature type="sequence variant" id="VAR_006826" description="In HPABH4A; dbSNP:rs765406631." evidence="9 11">
    <original>P</original>
    <variation>L</variation>
    <location>
        <position position="87"/>
    </location>
</feature>
<feature type="sequence variant" id="VAR_006827" description="In HPABH4A; severe form; dbSNP:rs104894276." evidence="14 17">
    <original>P</original>
    <variation>S</variation>
    <location>
        <position position="87"/>
    </location>
</feature>
<feature type="sequence variant" id="VAR_006828" description="In HPABH4A; severe form; dbSNP:rs104894280." evidence="17">
    <original>D</original>
    <variation>N</variation>
    <location>
        <position position="96"/>
    </location>
</feature>
<feature type="sequence variant" id="VAR_058266" description="In HPABH4A; dbSNP:rs750455879." evidence="7">
    <original>V</original>
    <variation>M</variation>
    <location>
        <position position="97"/>
    </location>
</feature>
<feature type="sequence variant" id="VAR_058267" description="In HPABH4A; dbSNP:rs1555198458." evidence="8">
    <original>Y</original>
    <variation>C</variation>
    <location>
        <position position="99"/>
    </location>
</feature>
<feature type="sequence variant" id="VAR_006829" description="In HPABH4A; dbSNP:rs2135410321.">
    <original>F</original>
    <variation>V</variation>
    <location>
        <position position="100"/>
    </location>
</feature>
<feature type="sequence variant" id="VAR_006830" description="In HPABH4A; dbSNP:rs200712908." evidence="17">
    <original>T</original>
    <variation>M</variation>
    <location>
        <position position="106"/>
    </location>
</feature>
<feature type="sequence variant" id="VAR_006831" description="In HPABH4A; dbSNP:rs1555198495." evidence="12 15">
    <original>I</original>
    <variation>V</variation>
    <location>
        <position position="114"/>
    </location>
</feature>
<feature type="sequence variant" id="VAR_008041" description="In HPABH4A; transient phenotype due to partial PTS deficiency; mild decrease of activity; dbSNP:rs104894279." evidence="5">
    <original>D</original>
    <variation>G</variation>
    <location>
        <position position="116"/>
    </location>
</feature>
<feature type="sequence variant" id="VAR_058268" description="In HPABH4A; dbSNP:rs150726932." evidence="9">
    <original>V</original>
    <variation>L</variation>
    <location>
        <position position="124"/>
    </location>
</feature>
<feature type="sequence variant" id="VAR_006832" description="In HPABH4A; dbSNP:rs1040441824." evidence="16">
    <original>K</original>
    <variation>E</variation>
    <location>
        <position position="129"/>
    </location>
</feature>
<feature type="sequence variant" id="VAR_058269" description="In HPABH4A; dbSNP:rs1859972447." evidence="9">
    <original>D</original>
    <variation>G</variation>
    <location>
        <position position="136"/>
    </location>
</feature>
<feature type="sequence variant" id="VAR_006833" description="In HPABH4A; dbSNP:rs1859972447." evidence="9 16">
    <original>D</original>
    <variation>V</variation>
    <location>
        <position position="136"/>
    </location>
</feature>
<feature type="mutagenesis site" description="Decrease in activity; abolishes phosphorylation by PKG." evidence="6">
    <original>S</original>
    <variation>A</variation>
    <location>
        <position position="19"/>
    </location>
</feature>
<feature type="sequence conflict" description="In Ref. 9; AAH18029." evidence="18" ref="9">
    <original>I</original>
    <variation>M</variation>
    <location>
        <position position="114"/>
    </location>
</feature>
<feature type="strand" evidence="23">
    <location>
        <begin position="11"/>
        <end position="24"/>
    </location>
</feature>
<feature type="strand" evidence="23">
    <location>
        <begin position="29"/>
        <end position="31"/>
    </location>
</feature>
<feature type="helix" evidence="23">
    <location>
        <begin position="33"/>
        <end position="40"/>
    </location>
</feature>
<feature type="helix" evidence="23">
    <location>
        <begin position="41"/>
        <end position="44"/>
    </location>
</feature>
<feature type="strand" evidence="23">
    <location>
        <begin position="49"/>
        <end position="62"/>
    </location>
</feature>
<feature type="turn" evidence="23">
    <location>
        <begin position="65"/>
        <end position="67"/>
    </location>
</feature>
<feature type="helix" evidence="23">
    <location>
        <begin position="73"/>
        <end position="83"/>
    </location>
</feature>
<feature type="helix" evidence="23">
    <location>
        <begin position="85"/>
        <end position="88"/>
    </location>
</feature>
<feature type="helix" evidence="23">
    <location>
        <begin position="93"/>
        <end position="96"/>
    </location>
</feature>
<feature type="helix" evidence="23">
    <location>
        <begin position="98"/>
        <end position="101"/>
    </location>
</feature>
<feature type="helix" evidence="23">
    <location>
        <begin position="107"/>
        <end position="119"/>
    </location>
</feature>
<feature type="strand" evidence="23">
    <location>
        <begin position="127"/>
        <end position="135"/>
    </location>
</feature>
<feature type="strand" evidence="23">
    <location>
        <begin position="138"/>
        <end position="142"/>
    </location>
</feature>
<dbReference type="EC" id="4.2.3.12"/>
<dbReference type="EMBL" id="M97655">
    <property type="protein sequence ID" value="AAA51541.1"/>
    <property type="molecule type" value="mRNA"/>
</dbReference>
<dbReference type="EMBL" id="D17400">
    <property type="protein sequence ID" value="BAA04224.1"/>
    <property type="molecule type" value="mRNA"/>
</dbReference>
<dbReference type="EMBL" id="D25234">
    <property type="protein sequence ID" value="BAA04959.1"/>
    <property type="molecule type" value="Genomic_DNA"/>
</dbReference>
<dbReference type="EMBL" id="L76259">
    <property type="protein sequence ID" value="AAB64229.1"/>
    <property type="molecule type" value="Genomic_DNA"/>
</dbReference>
<dbReference type="EMBL" id="U63383">
    <property type="protein sequence ID" value="AAC16970.1"/>
    <property type="molecule type" value="Genomic_DNA"/>
</dbReference>
<dbReference type="EMBL" id="U63380">
    <property type="protein sequence ID" value="AAC16970.1"/>
    <property type="status" value="JOINED"/>
    <property type="molecule type" value="Genomic_DNA"/>
</dbReference>
<dbReference type="EMBL" id="U63381">
    <property type="protein sequence ID" value="AAC16970.1"/>
    <property type="status" value="JOINED"/>
    <property type="molecule type" value="Genomic_DNA"/>
</dbReference>
<dbReference type="EMBL" id="U63382">
    <property type="protein sequence ID" value="AAC16970.1"/>
    <property type="status" value="JOINED"/>
    <property type="molecule type" value="Genomic_DNA"/>
</dbReference>
<dbReference type="EMBL" id="AB042297">
    <property type="protein sequence ID" value="BAA95486.1"/>
    <property type="molecule type" value="Genomic_DNA"/>
</dbReference>
<dbReference type="EMBL" id="EF445018">
    <property type="protein sequence ID" value="ACA06065.1"/>
    <property type="molecule type" value="Genomic_DNA"/>
</dbReference>
<dbReference type="EMBL" id="CH471065">
    <property type="protein sequence ID" value="EAW67195.1"/>
    <property type="molecule type" value="Genomic_DNA"/>
</dbReference>
<dbReference type="EMBL" id="BC009686">
    <property type="protein sequence ID" value="AAH09686.1"/>
    <property type="molecule type" value="mRNA"/>
</dbReference>
<dbReference type="EMBL" id="BC018029">
    <property type="protein sequence ID" value="AAH18029.1"/>
    <property type="molecule type" value="mRNA"/>
</dbReference>
<dbReference type="CCDS" id="CCDS8359.1"/>
<dbReference type="PIR" id="JC1405">
    <property type="entry name" value="JC1405"/>
</dbReference>
<dbReference type="RefSeq" id="NP_000308.1">
    <property type="nucleotide sequence ID" value="NM_000317.3"/>
</dbReference>
<dbReference type="RefSeq" id="XP_054225538.1">
    <property type="nucleotide sequence ID" value="XM_054369563.1"/>
</dbReference>
<dbReference type="RefSeq" id="XP_054225539.1">
    <property type="nucleotide sequence ID" value="XM_054369564.1"/>
</dbReference>
<dbReference type="PDB" id="3I2B">
    <property type="method" value="X-ray"/>
    <property type="resolution" value="2.30 A"/>
    <property type="chains" value="A/B/C/D/E/F/G/H/I/J/K/L=7-145"/>
</dbReference>
<dbReference type="PDBsum" id="3I2B"/>
<dbReference type="SMR" id="Q03393"/>
<dbReference type="BioGRID" id="111769">
    <property type="interactions" value="51"/>
</dbReference>
<dbReference type="FunCoup" id="Q03393">
    <property type="interactions" value="1747"/>
</dbReference>
<dbReference type="IntAct" id="Q03393">
    <property type="interactions" value="28"/>
</dbReference>
<dbReference type="MINT" id="Q03393"/>
<dbReference type="STRING" id="9606.ENSP00000280362"/>
<dbReference type="BindingDB" id="Q03393"/>
<dbReference type="ChEMBL" id="CHEMBL4630823"/>
<dbReference type="DrugBank" id="DB03886">
    <property type="generic name" value="Biopterin"/>
</dbReference>
<dbReference type="DrugBank" id="DB00688">
    <property type="generic name" value="Mycophenolate mofetil"/>
</dbReference>
<dbReference type="iPTMnet" id="Q03393"/>
<dbReference type="PhosphoSitePlus" id="Q03393"/>
<dbReference type="BioMuta" id="PTS"/>
<dbReference type="jPOST" id="Q03393"/>
<dbReference type="MassIVE" id="Q03393"/>
<dbReference type="PaxDb" id="9606-ENSP00000280362"/>
<dbReference type="PeptideAtlas" id="Q03393"/>
<dbReference type="ProteomicsDB" id="58205"/>
<dbReference type="Pumba" id="Q03393"/>
<dbReference type="TopDownProteomics" id="Q03393"/>
<dbReference type="Antibodypedia" id="780">
    <property type="antibodies" value="200 antibodies from 28 providers"/>
</dbReference>
<dbReference type="DNASU" id="5805"/>
<dbReference type="Ensembl" id="ENST00000280362.8">
    <property type="protein sequence ID" value="ENSP00000280362.3"/>
    <property type="gene ID" value="ENSG00000150787.8"/>
</dbReference>
<dbReference type="GeneID" id="5805"/>
<dbReference type="KEGG" id="hsa:5805"/>
<dbReference type="MANE-Select" id="ENST00000280362.8">
    <property type="protein sequence ID" value="ENSP00000280362.3"/>
    <property type="RefSeq nucleotide sequence ID" value="NM_000317.3"/>
    <property type="RefSeq protein sequence ID" value="NP_000308.1"/>
</dbReference>
<dbReference type="UCSC" id="uc001pnj.5">
    <property type="organism name" value="human"/>
</dbReference>
<dbReference type="AGR" id="HGNC:9689"/>
<dbReference type="CTD" id="5805"/>
<dbReference type="DisGeNET" id="5805"/>
<dbReference type="GeneCards" id="PTS"/>
<dbReference type="HGNC" id="HGNC:9689">
    <property type="gene designation" value="PTS"/>
</dbReference>
<dbReference type="HPA" id="ENSG00000150787">
    <property type="expression patterns" value="Low tissue specificity"/>
</dbReference>
<dbReference type="MalaCards" id="PTS"/>
<dbReference type="MIM" id="261640">
    <property type="type" value="phenotype"/>
</dbReference>
<dbReference type="MIM" id="612719">
    <property type="type" value="gene"/>
</dbReference>
<dbReference type="neXtProt" id="NX_Q03393"/>
<dbReference type="OpenTargets" id="ENSG00000150787"/>
<dbReference type="Orphanet" id="13">
    <property type="disease" value="6-pyruvoyl-tetrahydropterin synthase deficiency"/>
</dbReference>
<dbReference type="PharmGKB" id="PA34032"/>
<dbReference type="VEuPathDB" id="HostDB:ENSG00000150787"/>
<dbReference type="eggNOG" id="KOG4105">
    <property type="taxonomic scope" value="Eukaryota"/>
</dbReference>
<dbReference type="GeneTree" id="ENSGT00390000002752"/>
<dbReference type="HOGENOM" id="CLU_111016_2_0_1"/>
<dbReference type="InParanoid" id="Q03393"/>
<dbReference type="OMA" id="YETERNF"/>
<dbReference type="OrthoDB" id="14045at2759"/>
<dbReference type="PAN-GO" id="Q03393">
    <property type="GO annotations" value="1 GO annotation based on evolutionary models"/>
</dbReference>
<dbReference type="PhylomeDB" id="Q03393"/>
<dbReference type="TreeFam" id="TF105796"/>
<dbReference type="BioCyc" id="MetaCyc:HS07692-MONOMER"/>
<dbReference type="BRENDA" id="4.2.3.12">
    <property type="organism ID" value="2681"/>
</dbReference>
<dbReference type="PathwayCommons" id="Q03393"/>
<dbReference type="Reactome" id="R-HSA-1474151">
    <property type="pathway name" value="Tetrahydrobiopterin (BH4) synthesis, recycling, salvage and regulation"/>
</dbReference>
<dbReference type="SABIO-RK" id="Q03393"/>
<dbReference type="SignaLink" id="Q03393"/>
<dbReference type="SIGNOR" id="Q03393"/>
<dbReference type="UniPathway" id="UPA00849">
    <property type="reaction ID" value="UER00819"/>
</dbReference>
<dbReference type="BioGRID-ORCS" id="5805">
    <property type="hits" value="12 hits in 1163 CRISPR screens"/>
</dbReference>
<dbReference type="ChiTaRS" id="PTS">
    <property type="organism name" value="human"/>
</dbReference>
<dbReference type="EvolutionaryTrace" id="Q03393"/>
<dbReference type="GeneWiki" id="PTS_(gene)"/>
<dbReference type="GenomeRNAi" id="5805"/>
<dbReference type="Pharos" id="Q03393">
    <property type="development level" value="Tbio"/>
</dbReference>
<dbReference type="PRO" id="PR:Q03393"/>
<dbReference type="Proteomes" id="UP000005640">
    <property type="component" value="Chromosome 11"/>
</dbReference>
<dbReference type="RNAct" id="Q03393">
    <property type="molecule type" value="protein"/>
</dbReference>
<dbReference type="Bgee" id="ENSG00000150787">
    <property type="expression patterns" value="Expressed in adrenal tissue and 208 other cell types or tissues"/>
</dbReference>
<dbReference type="ExpressionAtlas" id="Q03393">
    <property type="expression patterns" value="baseline and differential"/>
</dbReference>
<dbReference type="GO" id="GO:0005737">
    <property type="term" value="C:cytoplasm"/>
    <property type="evidence" value="ECO:0000314"/>
    <property type="project" value="LIFEdb"/>
</dbReference>
<dbReference type="GO" id="GO:0005829">
    <property type="term" value="C:cytosol"/>
    <property type="evidence" value="ECO:0000304"/>
    <property type="project" value="Reactome"/>
</dbReference>
<dbReference type="GO" id="GO:0005739">
    <property type="term" value="C:mitochondrion"/>
    <property type="evidence" value="ECO:0000314"/>
    <property type="project" value="LIFEdb"/>
</dbReference>
<dbReference type="GO" id="GO:0003874">
    <property type="term" value="F:6-pyruvoyltetrahydropterin synthase activity"/>
    <property type="evidence" value="ECO:0000304"/>
    <property type="project" value="ProtInc"/>
</dbReference>
<dbReference type="GO" id="GO:0042802">
    <property type="term" value="F:identical protein binding"/>
    <property type="evidence" value="ECO:0000353"/>
    <property type="project" value="IntAct"/>
</dbReference>
<dbReference type="GO" id="GO:0046872">
    <property type="term" value="F:metal ion binding"/>
    <property type="evidence" value="ECO:0007669"/>
    <property type="project" value="UniProtKB-KW"/>
</dbReference>
<dbReference type="GO" id="GO:0006520">
    <property type="term" value="P:amino acid metabolic process"/>
    <property type="evidence" value="ECO:0000304"/>
    <property type="project" value="ProtInc"/>
</dbReference>
<dbReference type="GO" id="GO:0007417">
    <property type="term" value="P:central nervous system development"/>
    <property type="evidence" value="ECO:0000304"/>
    <property type="project" value="ProtInc"/>
</dbReference>
<dbReference type="GO" id="GO:0006729">
    <property type="term" value="P:tetrahydrobiopterin biosynthetic process"/>
    <property type="evidence" value="ECO:0000304"/>
    <property type="project" value="ProtInc"/>
</dbReference>
<dbReference type="CDD" id="cd00470">
    <property type="entry name" value="PTPS"/>
    <property type="match status" value="1"/>
</dbReference>
<dbReference type="FunFam" id="3.30.479.10:FF:000003">
    <property type="entry name" value="6-pyruvoyl tetrahydrobiopterin synthase"/>
    <property type="match status" value="1"/>
</dbReference>
<dbReference type="Gene3D" id="3.30.479.10">
    <property type="entry name" value="6-pyruvoyl tetrahydropterin synthase/QueD"/>
    <property type="match status" value="1"/>
</dbReference>
<dbReference type="InterPro" id="IPR007115">
    <property type="entry name" value="6-PTP_synth/QueD"/>
</dbReference>
<dbReference type="InterPro" id="IPR038418">
    <property type="entry name" value="6-PTP_synth/QueD_sf"/>
</dbReference>
<dbReference type="InterPro" id="IPR022470">
    <property type="entry name" value="PTPS_Cys_AS"/>
</dbReference>
<dbReference type="InterPro" id="IPR022469">
    <property type="entry name" value="PTPS_His_AS"/>
</dbReference>
<dbReference type="NCBIfam" id="TIGR00039">
    <property type="entry name" value="6PTHBS"/>
    <property type="match status" value="1"/>
</dbReference>
<dbReference type="PANTHER" id="PTHR12589:SF7">
    <property type="entry name" value="6-PYRUVOYL TETRAHYDROBIOPTERIN SYNTHASE"/>
    <property type="match status" value="1"/>
</dbReference>
<dbReference type="PANTHER" id="PTHR12589">
    <property type="entry name" value="PYRUVOYL TETRAHYDROBIOPTERIN SYNTHASE"/>
    <property type="match status" value="1"/>
</dbReference>
<dbReference type="Pfam" id="PF01242">
    <property type="entry name" value="PTPS"/>
    <property type="match status" value="1"/>
</dbReference>
<dbReference type="PIRSF" id="PIRSF006113">
    <property type="entry name" value="PTP_synth"/>
    <property type="match status" value="1"/>
</dbReference>
<dbReference type="SUPFAM" id="SSF55620">
    <property type="entry name" value="Tetrahydrobiopterin biosynthesis enzymes-like"/>
    <property type="match status" value="1"/>
</dbReference>
<dbReference type="PROSITE" id="PS00987">
    <property type="entry name" value="PTPS_1"/>
    <property type="match status" value="1"/>
</dbReference>
<dbReference type="PROSITE" id="PS00988">
    <property type="entry name" value="PTPS_2"/>
    <property type="match status" value="1"/>
</dbReference>
<keyword id="KW-0002">3D-structure</keyword>
<keyword id="KW-0225">Disease variant</keyword>
<keyword id="KW-0456">Lyase</keyword>
<keyword id="KW-0479">Metal-binding</keyword>
<keyword id="KW-0586">Phenylketonuria</keyword>
<keyword id="KW-0597">Phosphoprotein</keyword>
<keyword id="KW-1267">Proteomics identification</keyword>
<keyword id="KW-1185">Reference proteome</keyword>
<keyword id="KW-0783">Tetrahydrobiopterin biosynthesis</keyword>
<keyword id="KW-0862">Zinc</keyword>
<sequence length="145" mass="16386">MSTEGGGRRCQAQVSRRISFSASHRLYSKFLSDEENLKLFGKCNNPNGHGHNYKVVVTVHGEIDPATGMVMNLADLKKYMEEAIMQPLDHKNLDMDVPYFADVVSTTENVAVYIWDNLQKVLPVGVLYKVKVYETDNNIVVYKGE</sequence>
<accession>Q03393</accession>
<accession>B0YJ87</accession>
<accession>Q8WVG8</accession>
<protein>
    <recommendedName>
        <fullName>6-pyruvoyl tetrahydrobiopterin synthase</fullName>
        <shortName>PTP synthase</shortName>
        <shortName>PTPS</shortName>
        <ecNumber>4.2.3.12</ecNumber>
    </recommendedName>
</protein>
<proteinExistence type="evidence at protein level"/>
<comment type="function">
    <text evidence="10">Involved in the biosynthesis of tetrahydrobiopterin, an essential cofactor of aromatic amino acid hydroxylases. Catalyzes the transformation of 7,8-dihydroneopterin triphosphate into 6-pyruvoyl tetrahydropterin.</text>
</comment>
<comment type="catalytic activity">
    <reaction evidence="10">
        <text>7,8-dihydroneopterin 3'-triphosphate = 6-pyruvoyl-5,6,7,8-tetrahydropterin + triphosphate + H(+)</text>
        <dbReference type="Rhea" id="RHEA:22048"/>
        <dbReference type="ChEBI" id="CHEBI:15378"/>
        <dbReference type="ChEBI" id="CHEBI:18036"/>
        <dbReference type="ChEBI" id="CHEBI:58462"/>
        <dbReference type="ChEBI" id="CHEBI:136564"/>
        <dbReference type="EC" id="4.2.3.12"/>
    </reaction>
</comment>
<comment type="cofactor">
    <cofactor evidence="1">
        <name>Zn(2+)</name>
        <dbReference type="ChEBI" id="CHEBI:29105"/>
    </cofactor>
    <text evidence="1">Binds 1 zinc ion per subunit.</text>
</comment>
<comment type="biophysicochemical properties">
    <kinetics>
        <KM evidence="6">8.1 uM for 7,8-dihydroneopterin triphosphate</KM>
        <Vmax evidence="6">120.0 nmol/min/mg enzyme</Vmax>
    </kinetics>
</comment>
<comment type="pathway">
    <text>Cofactor biosynthesis; tetrahydrobiopterin biosynthesis; tetrahydrobiopterin from 7,8-dihydroneopterin triphosphate: step 1/3.</text>
</comment>
<comment type="subunit">
    <text>Homohexamer formed of two homotrimers in a head to head fashion.</text>
</comment>
<comment type="interaction">
    <interactant intactId="EBI-712344">
        <id>Q03393</id>
    </interactant>
    <interactant intactId="EBI-297683">
        <id>Q96CW1</id>
        <label>AP2M1</label>
    </interactant>
    <organismsDiffer>false</organismsDiffer>
    <experiments>3</experiments>
</comment>
<comment type="interaction">
    <interactant intactId="EBI-712344">
        <id>Q03393</id>
    </interactant>
    <interactant intactId="EBI-945751">
        <id>P38432</id>
        <label>COIL</label>
    </interactant>
    <organismsDiffer>false</organismsDiffer>
    <experiments>3</experiments>
</comment>
<comment type="interaction">
    <interactant intactId="EBI-712344">
        <id>Q03393</id>
    </interactant>
    <interactant intactId="EBI-742054">
        <id>Q96D03</id>
        <label>DDIT4L</label>
    </interactant>
    <organismsDiffer>false</organismsDiffer>
    <experiments>3</experiments>
</comment>
<comment type="interaction">
    <interactant intactId="EBI-712344">
        <id>Q03393</id>
    </interactant>
    <interactant intactId="EBI-740459">
        <id>P51116</id>
        <label>FXR2</label>
    </interactant>
    <organismsDiffer>false</organismsDiffer>
    <experiments>4</experiments>
</comment>
<comment type="interaction">
    <interactant intactId="EBI-712344">
        <id>Q03393</id>
    </interactant>
    <interactant intactId="EBI-739832">
        <id>Q8TBB1</id>
        <label>LNX1</label>
    </interactant>
    <organismsDiffer>false</organismsDiffer>
    <experiments>3</experiments>
</comment>
<comment type="interaction">
    <interactant intactId="EBI-712344">
        <id>Q03393</id>
    </interactant>
    <interactant intactId="EBI-741158">
        <id>Q96HA8</id>
        <label>NTAQ1</label>
    </interactant>
    <organismsDiffer>false</organismsDiffer>
    <experiments>3</experiments>
</comment>
<comment type="interaction">
    <interactant intactId="EBI-712344">
        <id>Q03393</id>
    </interactant>
    <interactant intactId="EBI-712344">
        <id>Q03393</id>
        <label>PTS</label>
    </interactant>
    <organismsDiffer>false</organismsDiffer>
    <experiments>16</experiments>
</comment>
<comment type="interaction">
    <interactant intactId="EBI-712344">
        <id>Q03393</id>
    </interactant>
    <interactant intactId="EBI-727004">
        <id>O00560</id>
        <label>SDCBP</label>
    </interactant>
    <organismsDiffer>false</organismsDiffer>
    <experiments>4</experiments>
</comment>
<comment type="interaction">
    <interactant intactId="EBI-712344">
        <id>Q03393</id>
    </interactant>
    <interactant intactId="EBI-745404">
        <id>Q9P2Z0</id>
        <label>THAP10</label>
    </interactant>
    <organismsDiffer>false</organismsDiffer>
    <experiments>3</experiments>
</comment>
<comment type="PTM">
    <text evidence="6">Phosphorylation of Ser-19 is required for maximal enzyme activity.</text>
</comment>
<comment type="disease" evidence="5 6 7 8 9 11 12 13 14 15 16 17">
    <disease id="DI-01277">
        <name>Hyperphenylalaninemia, BH4-deficient, A</name>
        <acronym>HPABH4A</acronym>
        <description>An autosomal recessive disorder characterized by hyperphenylalaninemia, depletion of the neurotransmitters dopamine and serotonin, and progressive cognitive and motor deficits. Neurological symptoms are unresponsive to the classic phenylalanine-low diet.</description>
        <dbReference type="MIM" id="261640"/>
    </disease>
    <text>The disease is caused by variants affecting the gene represented in this entry.</text>
</comment>
<comment type="miscellaneous">
    <text>The active site is at the interface between 2 subunits. The proton acceptor Cys is on one subunit, and the charge relay system is on the other subunit.</text>
</comment>
<comment type="similarity">
    <text evidence="18">Belongs to the PTPS family.</text>
</comment>